<gene>
    <name type="primary">mutX</name>
    <name type="ordered locus">SP_1168</name>
</gene>
<accession>P41354</accession>
<reference key="1">
    <citation type="journal article" date="1994" name="Mol. Microbiol.">
        <title>Characterization of the mutX gene of Streptococcus pneumoniae as a homologue of Escherichia coli mutT, and tentative definition of a catalytic domain of the dGTP pyrophosphohydrolases.</title>
        <authorList>
            <person name="Mejean V."/>
            <person name="Salles C."/>
            <person name="Bullions L.C."/>
            <person name="Bessman M.J."/>
            <person name="Claverys J.-P."/>
        </authorList>
    </citation>
    <scope>NUCLEOTIDE SEQUENCE [GENOMIC DNA]</scope>
    <scope>CHARACTERIZATION</scope>
    <source>
        <strain>R6 / R800</strain>
    </source>
</reference>
<reference key="2">
    <citation type="journal article" date="2001" name="Science">
        <title>Complete genome sequence of a virulent isolate of Streptococcus pneumoniae.</title>
        <authorList>
            <person name="Tettelin H."/>
            <person name="Nelson K.E."/>
            <person name="Paulsen I.T."/>
            <person name="Eisen J.A."/>
            <person name="Read T.D."/>
            <person name="Peterson S.N."/>
            <person name="Heidelberg J.F."/>
            <person name="DeBoy R.T."/>
            <person name="Haft D.H."/>
            <person name="Dodson R.J."/>
            <person name="Durkin A.S."/>
            <person name="Gwinn M.L."/>
            <person name="Kolonay J.F."/>
            <person name="Nelson W.C."/>
            <person name="Peterson J.D."/>
            <person name="Umayam L.A."/>
            <person name="White O."/>
            <person name="Salzberg S.L."/>
            <person name="Lewis M.R."/>
            <person name="Radune D."/>
            <person name="Holtzapple E.K."/>
            <person name="Khouri H.M."/>
            <person name="Wolf A.M."/>
            <person name="Utterback T.R."/>
            <person name="Hansen C.L."/>
            <person name="McDonald L.A."/>
            <person name="Feldblyum T.V."/>
            <person name="Angiuoli S.V."/>
            <person name="Dickinson T."/>
            <person name="Hickey E.K."/>
            <person name="Holt I.E."/>
            <person name="Loftus B.J."/>
            <person name="Yang F."/>
            <person name="Smith H.O."/>
            <person name="Venter J.C."/>
            <person name="Dougherty B.A."/>
            <person name="Morrison D.A."/>
            <person name="Hollingshead S.K."/>
            <person name="Fraser C.M."/>
        </authorList>
    </citation>
    <scope>NUCLEOTIDE SEQUENCE [LARGE SCALE GENOMIC DNA]</scope>
    <source>
        <strain>ATCC BAA-334 / TIGR4</strain>
    </source>
</reference>
<reference key="3">
    <citation type="journal article" date="1994" name="J. Biol. Chem.">
        <title>Purification of the MutX protein of Streptococcus pneumoniae, a homologue of Escherichia coli MutT. Identification of a novel catalytic domain for nucleoside triphosphate pyrophosphohydrolase activity.</title>
        <authorList>
            <person name="Bullions L.C."/>
            <person name="Mejean V."/>
            <person name="Claverys J.-P."/>
            <person name="Bessman M.J."/>
        </authorList>
    </citation>
    <scope>CHARACTERIZATION</scope>
</reference>
<proteinExistence type="evidence at protein level"/>
<sequence>MPQLATICYIDNGKELLMLHRNKKPNDVHEGKWIGVGGKLERGETPQECAAREILEETGLKAKPVLKGVITFPEFTPDLDWYTYVFKVTEFEGDLIDCNEGTLEWVPYDEVLSKPTWEGDHTFVEWLLEDKPFFSAKFVYDGDKLLDTQVDFYE</sequence>
<comment type="function">
    <text>Involved in the DNA repair system to avoid A.T to G.C transversions. Degrades 8-oxo-dGTP to the monophosphate, but is also active on all of the nucleoside triphosphates.</text>
</comment>
<comment type="catalytic activity">
    <reaction>
        <text>8-oxo-dGTP + H2O = 8-oxo-dGMP + diphosphate + H(+)</text>
        <dbReference type="Rhea" id="RHEA:31575"/>
        <dbReference type="ChEBI" id="CHEBI:15377"/>
        <dbReference type="ChEBI" id="CHEBI:15378"/>
        <dbReference type="ChEBI" id="CHEBI:33019"/>
        <dbReference type="ChEBI" id="CHEBI:63224"/>
        <dbReference type="ChEBI" id="CHEBI:77896"/>
        <dbReference type="EC" id="3.6.1.55"/>
    </reaction>
</comment>
<comment type="cofactor">
    <cofactor>
        <name>Mg(2+)</name>
        <dbReference type="ChEBI" id="CHEBI:18420"/>
    </cofactor>
</comment>
<comment type="subunit">
    <text>Homotrimer.</text>
</comment>
<comment type="interaction">
    <interactant intactId="EBI-2207232">
        <id>P41354</id>
    </interactant>
    <interactant intactId="EBI-2207079">
        <id>P95830</id>
        <label>dnaJ</label>
    </interactant>
    <organismsDiffer>false</organismsDiffer>
    <experiments>2</experiments>
</comment>
<comment type="interaction">
    <interactant intactId="EBI-2207232">
        <id>P41354</id>
    </interactant>
    <interactant intactId="EBI-2207053">
        <id>Q97SE5</id>
        <label>gatC</label>
    </interactant>
    <organismsDiffer>false</organismsDiffer>
    <experiments>2</experiments>
</comment>
<comment type="interaction">
    <interactant intactId="EBI-2207232">
        <id>P41354</id>
    </interactant>
    <interactant intactId="EBI-2206949">
        <id>Q97NV3</id>
        <label>groES</label>
    </interactant>
    <organismsDiffer>false</organismsDiffer>
    <experiments>2</experiments>
</comment>
<comment type="interaction">
    <interactant intactId="EBI-2207232">
        <id>P41354</id>
    </interactant>
    <interactant intactId="EBI-2207065">
        <id>Q97S73</id>
        <label>grpE</label>
    </interactant>
    <organismsDiffer>false</organismsDiffer>
    <experiments>2</experiments>
</comment>
<comment type="interaction">
    <interactant intactId="EBI-2207232">
        <id>P41354</id>
    </interactant>
    <interactant intactId="EBI-2206983">
        <id>Q97SR4</id>
        <label>uppS</label>
    </interactant>
    <organismsDiffer>false</organismsDiffer>
    <experiments>2</experiments>
</comment>
<comment type="similarity">
    <text evidence="3">Belongs to the Nudix hydrolase family.</text>
</comment>
<name>MUTX_STRPN</name>
<dbReference type="EC" id="3.6.1.55"/>
<dbReference type="EMBL" id="Z21702">
    <property type="protein sequence ID" value="CAA79807.1"/>
    <property type="molecule type" value="Genomic_DNA"/>
</dbReference>
<dbReference type="EMBL" id="AE005672">
    <property type="protein sequence ID" value="AAK75277.1"/>
    <property type="molecule type" value="Genomic_DNA"/>
</dbReference>
<dbReference type="PIR" id="D95135">
    <property type="entry name" value="D95135"/>
</dbReference>
<dbReference type="PIR" id="F98003">
    <property type="entry name" value="F98003"/>
</dbReference>
<dbReference type="PIR" id="S41532">
    <property type="entry name" value="S41532"/>
</dbReference>
<dbReference type="RefSeq" id="WP_001135768.1">
    <property type="nucleotide sequence ID" value="NZ_CP155539.1"/>
</dbReference>
<dbReference type="SMR" id="P41354"/>
<dbReference type="IntAct" id="P41354">
    <property type="interactions" value="5"/>
</dbReference>
<dbReference type="PaxDb" id="170187-SP_1168"/>
<dbReference type="EnsemblBacteria" id="AAK75277">
    <property type="protein sequence ID" value="AAK75277"/>
    <property type="gene ID" value="SP_1168"/>
</dbReference>
<dbReference type="KEGG" id="spn:SP_1168"/>
<dbReference type="eggNOG" id="COG1051">
    <property type="taxonomic scope" value="Bacteria"/>
</dbReference>
<dbReference type="PhylomeDB" id="P41354"/>
<dbReference type="BioCyc" id="SPNE170187:G1FZB-1188-MONOMER"/>
<dbReference type="Proteomes" id="UP000000585">
    <property type="component" value="Chromosome"/>
</dbReference>
<dbReference type="GO" id="GO:0005737">
    <property type="term" value="C:cytoplasm"/>
    <property type="evidence" value="ECO:0007669"/>
    <property type="project" value="TreeGrafter"/>
</dbReference>
<dbReference type="GO" id="GO:0035539">
    <property type="term" value="F:8-oxo-7,8-dihydrodeoxyguanosine triphosphate pyrophosphatase activity"/>
    <property type="evidence" value="ECO:0007669"/>
    <property type="project" value="UniProtKB-EC"/>
</dbReference>
<dbReference type="GO" id="GO:0008413">
    <property type="term" value="F:8-oxo-7,8-dihydroguanosine triphosphate pyrophosphatase activity"/>
    <property type="evidence" value="ECO:0007669"/>
    <property type="project" value="InterPro"/>
</dbReference>
<dbReference type="GO" id="GO:0046872">
    <property type="term" value="F:metal ion binding"/>
    <property type="evidence" value="ECO:0007669"/>
    <property type="project" value="UniProtKB-KW"/>
</dbReference>
<dbReference type="GO" id="GO:0006281">
    <property type="term" value="P:DNA repair"/>
    <property type="evidence" value="ECO:0007669"/>
    <property type="project" value="UniProtKB-KW"/>
</dbReference>
<dbReference type="GO" id="GO:0006260">
    <property type="term" value="P:DNA replication"/>
    <property type="evidence" value="ECO:0007669"/>
    <property type="project" value="UniProtKB-KW"/>
</dbReference>
<dbReference type="CDD" id="cd18886">
    <property type="entry name" value="NUDIX_MutT_Nudt1"/>
    <property type="match status" value="1"/>
</dbReference>
<dbReference type="FunFam" id="3.90.79.10:FF:000029">
    <property type="entry name" value="Mutator mutT protein"/>
    <property type="match status" value="1"/>
</dbReference>
<dbReference type="Gene3D" id="3.90.79.10">
    <property type="entry name" value="Nucleoside Triphosphate Pyrophosphohydrolase"/>
    <property type="match status" value="1"/>
</dbReference>
<dbReference type="InterPro" id="IPR003562">
    <property type="entry name" value="Mutator_MutX_prot"/>
</dbReference>
<dbReference type="InterPro" id="IPR020476">
    <property type="entry name" value="Nudix_hydrolase"/>
</dbReference>
<dbReference type="InterPro" id="IPR015797">
    <property type="entry name" value="NUDIX_hydrolase-like_dom_sf"/>
</dbReference>
<dbReference type="InterPro" id="IPR020084">
    <property type="entry name" value="NUDIX_hydrolase_CS"/>
</dbReference>
<dbReference type="InterPro" id="IPR000086">
    <property type="entry name" value="NUDIX_hydrolase_dom"/>
</dbReference>
<dbReference type="PANTHER" id="PTHR43758">
    <property type="entry name" value="7,8-DIHYDRO-8-OXOGUANINE TRIPHOSPHATASE"/>
    <property type="match status" value="1"/>
</dbReference>
<dbReference type="PANTHER" id="PTHR43758:SF2">
    <property type="entry name" value="OXIDIZED PURINE NUCLEOSIDE TRIPHOSPHATE HYDROLASE"/>
    <property type="match status" value="1"/>
</dbReference>
<dbReference type="Pfam" id="PF00293">
    <property type="entry name" value="NUDIX"/>
    <property type="match status" value="1"/>
</dbReference>
<dbReference type="PRINTS" id="PR01402">
    <property type="entry name" value="MUTATORMUTX"/>
</dbReference>
<dbReference type="PRINTS" id="PR00502">
    <property type="entry name" value="NUDIXFAMILY"/>
</dbReference>
<dbReference type="SUPFAM" id="SSF55811">
    <property type="entry name" value="Nudix"/>
    <property type="match status" value="1"/>
</dbReference>
<dbReference type="PROSITE" id="PS51462">
    <property type="entry name" value="NUDIX"/>
    <property type="match status" value="1"/>
</dbReference>
<dbReference type="PROSITE" id="PS00893">
    <property type="entry name" value="NUDIX_BOX"/>
    <property type="match status" value="1"/>
</dbReference>
<evidence type="ECO:0000250" key="1"/>
<evidence type="ECO:0000255" key="2">
    <source>
        <dbReference type="PROSITE-ProRule" id="PRU00794"/>
    </source>
</evidence>
<evidence type="ECO:0000305" key="3"/>
<organism>
    <name type="scientific">Streptococcus pneumoniae serotype 4 (strain ATCC BAA-334 / TIGR4)</name>
    <dbReference type="NCBI Taxonomy" id="170187"/>
    <lineage>
        <taxon>Bacteria</taxon>
        <taxon>Bacillati</taxon>
        <taxon>Bacillota</taxon>
        <taxon>Bacilli</taxon>
        <taxon>Lactobacillales</taxon>
        <taxon>Streptococcaceae</taxon>
        <taxon>Streptococcus</taxon>
    </lineage>
</organism>
<keyword id="KW-0227">DNA damage</keyword>
<keyword id="KW-0234">DNA repair</keyword>
<keyword id="KW-0235">DNA replication</keyword>
<keyword id="KW-0378">Hydrolase</keyword>
<keyword id="KW-0460">Magnesium</keyword>
<keyword id="KW-0479">Metal-binding</keyword>
<keyword id="KW-0515">Mutator protein</keyword>
<keyword id="KW-1185">Reference proteome</keyword>
<protein>
    <recommendedName>
        <fullName>8-oxo-dGTP diphosphatase</fullName>
        <shortName>8-oxo-dGTPase</shortName>
        <ecNumber>3.6.1.55</ecNumber>
    </recommendedName>
    <alternativeName>
        <fullName>7,8-dihydro-8-oxoguanine-triphosphatase</fullName>
    </alternativeName>
    <alternativeName>
        <fullName>Mutator protein MutT</fullName>
    </alternativeName>
    <alternativeName>
        <fullName>dGTP pyrophosphohydrolase</fullName>
    </alternativeName>
</protein>
<feature type="chain" id="PRO_0000056948" description="8-oxo-dGTP diphosphatase">
    <location>
        <begin position="1"/>
        <end position="154"/>
    </location>
</feature>
<feature type="domain" description="Nudix hydrolase" evidence="2">
    <location>
        <begin position="1"/>
        <end position="129"/>
    </location>
</feature>
<feature type="short sequence motif" description="Nudix box">
    <location>
        <begin position="38"/>
        <end position="59"/>
    </location>
</feature>
<feature type="binding site" evidence="1">
    <location>
        <position position="38"/>
    </location>
    <ligand>
        <name>Mg(2+)</name>
        <dbReference type="ChEBI" id="CHEBI:18420"/>
    </ligand>
</feature>
<feature type="binding site" evidence="1">
    <location>
        <position position="53"/>
    </location>
    <ligand>
        <name>Mg(2+)</name>
        <dbReference type="ChEBI" id="CHEBI:18420"/>
    </ligand>
</feature>
<feature type="binding site" evidence="1">
    <location>
        <position position="56"/>
    </location>
    <ligand>
        <name>Mg(2+)</name>
        <dbReference type="ChEBI" id="CHEBI:18420"/>
    </ligand>
</feature>
<feature type="binding site" evidence="1">
    <location>
        <position position="57"/>
    </location>
    <ligand>
        <name>Mg(2+)</name>
        <dbReference type="ChEBI" id="CHEBI:18420"/>
    </ligand>
</feature>
<feature type="sequence conflict" description="In Ref. 1; CAA79807." evidence="3" ref="1">
    <original>A</original>
    <variation>V</variation>
    <location>
        <position position="51"/>
    </location>
</feature>
<feature type="sequence conflict" description="In Ref. 1; CAA79807." evidence="3" ref="1">
    <original>T</original>
    <variation>M</variation>
    <location>
        <position position="102"/>
    </location>
</feature>